<comment type="function">
    <text evidence="1">Involved in the binding of tRNA to the ribosomes.</text>
</comment>
<comment type="subunit">
    <text evidence="1">Part of the 30S ribosomal subunit.</text>
</comment>
<comment type="similarity">
    <text evidence="1">Belongs to the universal ribosomal protein uS10 family.</text>
</comment>
<proteinExistence type="evidence at protein level"/>
<evidence type="ECO:0000255" key="1">
    <source>
        <dbReference type="HAMAP-Rule" id="MF_00508"/>
    </source>
</evidence>
<evidence type="ECO:0000305" key="2"/>
<gene>
    <name evidence="1" type="primary">rpsJ</name>
    <name type="ordered locus">SAB2123c</name>
</gene>
<organism>
    <name type="scientific">Staphylococcus aureus (strain bovine RF122 / ET3-1)</name>
    <dbReference type="NCBI Taxonomy" id="273036"/>
    <lineage>
        <taxon>Bacteria</taxon>
        <taxon>Bacillati</taxon>
        <taxon>Bacillota</taxon>
        <taxon>Bacilli</taxon>
        <taxon>Bacillales</taxon>
        <taxon>Staphylococcaceae</taxon>
        <taxon>Staphylococcus</taxon>
    </lineage>
</organism>
<dbReference type="EMBL" id="AJ938182">
    <property type="protein sequence ID" value="CAI81812.1"/>
    <property type="molecule type" value="Genomic_DNA"/>
</dbReference>
<dbReference type="RefSeq" id="WP_001118667.1">
    <property type="nucleotide sequence ID" value="NC_007622.1"/>
</dbReference>
<dbReference type="PDB" id="6FXC">
    <property type="method" value="EM"/>
    <property type="resolution" value="6.76 A"/>
    <property type="chains" value="Aj/Bj=6-102"/>
</dbReference>
<dbReference type="PDBsum" id="6FXC"/>
<dbReference type="EMDB" id="EMD-3637"/>
<dbReference type="EMDB" id="EMD-8402"/>
<dbReference type="SMR" id="Q2YYP5"/>
<dbReference type="GeneID" id="98346563"/>
<dbReference type="KEGG" id="sab:SAB2123c"/>
<dbReference type="HOGENOM" id="CLU_122625_1_3_9"/>
<dbReference type="GO" id="GO:1990904">
    <property type="term" value="C:ribonucleoprotein complex"/>
    <property type="evidence" value="ECO:0007669"/>
    <property type="project" value="UniProtKB-KW"/>
</dbReference>
<dbReference type="GO" id="GO:0005840">
    <property type="term" value="C:ribosome"/>
    <property type="evidence" value="ECO:0007669"/>
    <property type="project" value="UniProtKB-KW"/>
</dbReference>
<dbReference type="GO" id="GO:0003735">
    <property type="term" value="F:structural constituent of ribosome"/>
    <property type="evidence" value="ECO:0007669"/>
    <property type="project" value="InterPro"/>
</dbReference>
<dbReference type="GO" id="GO:0000049">
    <property type="term" value="F:tRNA binding"/>
    <property type="evidence" value="ECO:0007669"/>
    <property type="project" value="UniProtKB-UniRule"/>
</dbReference>
<dbReference type="GO" id="GO:0006412">
    <property type="term" value="P:translation"/>
    <property type="evidence" value="ECO:0007669"/>
    <property type="project" value="UniProtKB-UniRule"/>
</dbReference>
<dbReference type="FunFam" id="3.30.70.600:FF:000001">
    <property type="entry name" value="30S ribosomal protein S10"/>
    <property type="match status" value="1"/>
</dbReference>
<dbReference type="Gene3D" id="3.30.70.600">
    <property type="entry name" value="Ribosomal protein S10 domain"/>
    <property type="match status" value="1"/>
</dbReference>
<dbReference type="HAMAP" id="MF_00508">
    <property type="entry name" value="Ribosomal_uS10"/>
    <property type="match status" value="1"/>
</dbReference>
<dbReference type="InterPro" id="IPR001848">
    <property type="entry name" value="Ribosomal_uS10"/>
</dbReference>
<dbReference type="InterPro" id="IPR018268">
    <property type="entry name" value="Ribosomal_uS10_CS"/>
</dbReference>
<dbReference type="InterPro" id="IPR027486">
    <property type="entry name" value="Ribosomal_uS10_dom"/>
</dbReference>
<dbReference type="InterPro" id="IPR036838">
    <property type="entry name" value="Ribosomal_uS10_dom_sf"/>
</dbReference>
<dbReference type="NCBIfam" id="NF001861">
    <property type="entry name" value="PRK00596.1"/>
    <property type="match status" value="1"/>
</dbReference>
<dbReference type="NCBIfam" id="TIGR01049">
    <property type="entry name" value="rpsJ_bact"/>
    <property type="match status" value="1"/>
</dbReference>
<dbReference type="PANTHER" id="PTHR11700">
    <property type="entry name" value="30S RIBOSOMAL PROTEIN S10 FAMILY MEMBER"/>
    <property type="match status" value="1"/>
</dbReference>
<dbReference type="Pfam" id="PF00338">
    <property type="entry name" value="Ribosomal_S10"/>
    <property type="match status" value="1"/>
</dbReference>
<dbReference type="PRINTS" id="PR00971">
    <property type="entry name" value="RIBOSOMALS10"/>
</dbReference>
<dbReference type="SMART" id="SM01403">
    <property type="entry name" value="Ribosomal_S10"/>
    <property type="match status" value="1"/>
</dbReference>
<dbReference type="SUPFAM" id="SSF54999">
    <property type="entry name" value="Ribosomal protein S10"/>
    <property type="match status" value="1"/>
</dbReference>
<dbReference type="PROSITE" id="PS00361">
    <property type="entry name" value="RIBOSOMAL_S10"/>
    <property type="match status" value="1"/>
</dbReference>
<feature type="chain" id="PRO_0000237098" description="Small ribosomal subunit protein uS10">
    <location>
        <begin position="1"/>
        <end position="102"/>
    </location>
</feature>
<reference key="1">
    <citation type="journal article" date="2007" name="PLoS ONE">
        <title>Molecular correlates of host specialization in Staphylococcus aureus.</title>
        <authorList>
            <person name="Herron-Olson L."/>
            <person name="Fitzgerald J.R."/>
            <person name="Musser J.M."/>
            <person name="Kapur V."/>
        </authorList>
    </citation>
    <scope>NUCLEOTIDE SEQUENCE [LARGE SCALE GENOMIC DNA]</scope>
    <source>
        <strain>bovine RF122 / ET3-1</strain>
    </source>
</reference>
<accession>Q2YYP5</accession>
<protein>
    <recommendedName>
        <fullName evidence="1">Small ribosomal subunit protein uS10</fullName>
    </recommendedName>
    <alternativeName>
        <fullName evidence="2">30S ribosomal protein S10</fullName>
    </alternativeName>
</protein>
<keyword id="KW-0002">3D-structure</keyword>
<keyword id="KW-0687">Ribonucleoprotein</keyword>
<keyword id="KW-0689">Ribosomal protein</keyword>
<name>RS10_STAAB</name>
<sequence length="102" mass="11576">MAKQKIRIRLKAYDHRVIDQSAEKIVETAKRSGADVSGPIPLPTEKSVYTIIRAVHKYKDSREQFEQRTHKRLIDIVNPTPKTVDALMGLNLPSGVDIEIKL</sequence>